<comment type="function">
    <text evidence="1 2">Multifunctional protein involved in mechanosensation, and plays an essential role in lipid metabolism and adipocyte differentiation. May function as an ion channel involved in sensing mechanical stimuli. Mediates the mechanosensitivity of the PKD2-TMEM120A channel complex through direct physical interaction (By similarity). TMEM120A seems to affect mechanosensation by inhibiting PIEZO2 channels, possibly by altering cellular lipid content (By similarity). TMEM120A is structurally similar to a lipid-modifying enzyme, ELOVL7, and contains a bound coenzyme A molecule, which suggests it might function as an enzyme in lipid metabolism. Additionnaly, implicated in innate immune response against Zika virus. Acts as a key activator of the antiviral signaling involving STING1 (By similarity).</text>
</comment>
<comment type="subunit">
    <text evidence="2">Homodimer. Forms heterooligomer with TMEM120B. Interacts with PKD2; TMEM120A inhibits PKD2 channel activity through the physical association of PKD2 with TMEM120A.</text>
</comment>
<comment type="subcellular location">
    <subcellularLocation>
        <location evidence="2">Cell membrane</location>
        <topology evidence="2">Multi-pass membrane protein</topology>
    </subcellularLocation>
    <subcellularLocation>
        <location evidence="1">Nucleus inner membrane</location>
        <topology evidence="2">Multi-pass membrane protein</topology>
    </subcellularLocation>
    <subcellularLocation>
        <location evidence="2">Endoplasmic reticulum</location>
    </subcellularLocation>
</comment>
<comment type="domain">
    <text evidence="2">The transmembrane domain (TMD) has structural homology to the very long chain fatty acid elongase 7, ELOVL7, despite low sequence homology between them.</text>
</comment>
<comment type="similarity">
    <text evidence="3">Belongs to the TMEM120 family.</text>
</comment>
<comment type="caution">
    <text evidence="2 3">Whether TMEM120S functions as a mechanosensitive ion channel is controversial (By similarity). Several studies show that TMEM120A does not exhibit mechanosensitive channel activity and display no typical ion channel structural characteristics (By similarity). One publication, however, suggests the presence of a potential ion permeation pathway based on molecular dynamics simulation (By similarity). Its structural homology to ELOVL7, leads to suggest than TMEM120A may function as an enzyme involved in fatty acid metabolism, although its enzymatic activity and its potential substrates remain unknown (By similarity). Whether TMEM120A is an enzyme rather than an ion channel is still under debate.</text>
</comment>
<keyword id="KW-1003">Cell membrane</keyword>
<keyword id="KW-0256">Endoplasmic reticulum</keyword>
<keyword id="KW-0472">Membrane</keyword>
<keyword id="KW-0539">Nucleus</keyword>
<keyword id="KW-1185">Reference proteome</keyword>
<keyword id="KW-0812">Transmembrane</keyword>
<keyword id="KW-1133">Transmembrane helix</keyword>
<accession>Q05B45</accession>
<evidence type="ECO:0000250" key="1">
    <source>
        <dbReference type="UniProtKB" id="Q8C1E7"/>
    </source>
</evidence>
<evidence type="ECO:0000250" key="2">
    <source>
        <dbReference type="UniProtKB" id="Q9BXJ8"/>
    </source>
</evidence>
<evidence type="ECO:0000305" key="3"/>
<sequence>MHPPPPGPLGDCLRDWEELQQDFHGIQETHRLYRLKLEELTKLQNSCTSSITRQKKRLQELALVLRKCKPSLPSEAEEAARELENQIKERQGLFFDMEAYLPKKNGLYLSLVLGNVNVTLLSKQAKFAYKDEYEKFKLYLTIILILISFTCRFLLNSRVTDAAFNFLLVWYYCTLTIRESILINNGSRIKGWWVFHHYVSTFLSGVMLTWPDGLMYQKFRNQFLSFSMYQSFVQFLQYYYQSGCLYRLRALGERHTMDLTVEGFQSWMWRGLTFLLPFLFFGHFWQLFNALTLFNLARDPECKEWQVLMCGFPFLLLFLGNFFTTLRVVHQKFHNQLHGSKKE</sequence>
<gene>
    <name evidence="1" type="primary">TMEM120A</name>
</gene>
<feature type="chain" id="PRO_0000309338" description="Transmembrane protein 120A">
    <location>
        <begin position="1"/>
        <end position="343"/>
    </location>
</feature>
<feature type="topological domain" description="Cytoplasmic" evidence="3">
    <location>
        <begin position="1"/>
        <end position="132"/>
    </location>
</feature>
<feature type="transmembrane region" description="Helical; Name=1" evidence="2">
    <location>
        <begin position="133"/>
        <end position="152"/>
    </location>
</feature>
<feature type="topological domain" description="Extracellular" evidence="3">
    <location>
        <begin position="153"/>
        <end position="158"/>
    </location>
</feature>
<feature type="transmembrane region" description="Helical; Name=2" evidence="2">
    <location>
        <begin position="159"/>
        <end position="177"/>
    </location>
</feature>
<feature type="topological domain" description="Cytoplasmic" evidence="3">
    <location>
        <begin position="178"/>
        <end position="190"/>
    </location>
</feature>
<feature type="transmembrane region" description="Helical; Name=3" evidence="2">
    <location>
        <begin position="191"/>
        <end position="209"/>
    </location>
</feature>
<feature type="topological domain" description="Extracellular" evidence="3">
    <location>
        <begin position="210"/>
        <end position="218"/>
    </location>
</feature>
<feature type="transmembrane region" description="Helical; Name=4" evidence="2">
    <location>
        <begin position="219"/>
        <end position="240"/>
    </location>
</feature>
<feature type="topological domain" description="Cytoplasmic" evidence="3">
    <location>
        <begin position="241"/>
        <end position="270"/>
    </location>
</feature>
<feature type="transmembrane region" description="Helical; Name=5" evidence="2">
    <location>
        <begin position="271"/>
        <end position="294"/>
    </location>
</feature>
<feature type="topological domain" description="Extracellular" evidence="3">
    <location>
        <begin position="295"/>
        <end position="304"/>
    </location>
</feature>
<feature type="transmembrane region" description="Helical; Name=6" evidence="2">
    <location>
        <begin position="305"/>
        <end position="330"/>
    </location>
</feature>
<feature type="topological domain" description="Cytoplasmic" evidence="3">
    <location>
        <begin position="331"/>
        <end position="343"/>
    </location>
</feature>
<feature type="binding site" evidence="2">
    <location>
        <position position="130"/>
    </location>
    <ligand>
        <name>CoA</name>
        <dbReference type="ChEBI" id="CHEBI:57287"/>
    </ligand>
</feature>
<feature type="binding site" evidence="2">
    <location>
        <position position="187"/>
    </location>
    <ligand>
        <name>CoA</name>
        <dbReference type="ChEBI" id="CHEBI:57287"/>
    </ligand>
</feature>
<feature type="binding site" evidence="2">
    <location>
        <position position="188"/>
    </location>
    <ligand>
        <name>CoA</name>
        <dbReference type="ChEBI" id="CHEBI:57287"/>
    </ligand>
</feature>
<feature type="binding site" evidence="2">
    <location>
        <position position="237"/>
    </location>
    <ligand>
        <name>CoA</name>
        <dbReference type="ChEBI" id="CHEBI:57287"/>
    </ligand>
</feature>
<feature type="binding site" evidence="2">
    <location>
        <position position="240"/>
    </location>
    <ligand>
        <name>CoA</name>
        <dbReference type="ChEBI" id="CHEBI:57287"/>
    </ligand>
</feature>
<feature type="binding site" evidence="2">
    <location>
        <position position="241"/>
    </location>
    <ligand>
        <name>CoA</name>
        <dbReference type="ChEBI" id="CHEBI:57287"/>
    </ligand>
</feature>
<feature type="binding site" evidence="1">
    <location>
        <position position="283"/>
    </location>
    <ligand>
        <name>CoA</name>
        <dbReference type="ChEBI" id="CHEBI:57287"/>
    </ligand>
</feature>
<feature type="binding site" evidence="2">
    <location>
        <position position="332"/>
    </location>
    <ligand>
        <name>CoA</name>
        <dbReference type="ChEBI" id="CHEBI:57287"/>
    </ligand>
</feature>
<protein>
    <recommendedName>
        <fullName evidence="3">Transmembrane protein 120A</fullName>
    </recommendedName>
    <alternativeName>
        <fullName evidence="1">Ion channel TACAN</fullName>
    </alternativeName>
</protein>
<proteinExistence type="evidence at transcript level"/>
<organism>
    <name type="scientific">Bos taurus</name>
    <name type="common">Bovine</name>
    <dbReference type="NCBI Taxonomy" id="9913"/>
    <lineage>
        <taxon>Eukaryota</taxon>
        <taxon>Metazoa</taxon>
        <taxon>Chordata</taxon>
        <taxon>Craniata</taxon>
        <taxon>Vertebrata</taxon>
        <taxon>Euteleostomi</taxon>
        <taxon>Mammalia</taxon>
        <taxon>Eutheria</taxon>
        <taxon>Laurasiatheria</taxon>
        <taxon>Artiodactyla</taxon>
        <taxon>Ruminantia</taxon>
        <taxon>Pecora</taxon>
        <taxon>Bovidae</taxon>
        <taxon>Bovinae</taxon>
        <taxon>Bos</taxon>
    </lineage>
</organism>
<reference key="1">
    <citation type="submission" date="2006-08" db="EMBL/GenBank/DDBJ databases">
        <authorList>
            <consortium name="NIH - Mammalian Gene Collection (MGC) project"/>
        </authorList>
    </citation>
    <scope>NUCLEOTIDE SEQUENCE [LARGE SCALE MRNA]</scope>
    <source>
        <strain>Hereford</strain>
        <tissue>Basal ganglia</tissue>
    </source>
</reference>
<dbReference type="EMBL" id="BC122849">
    <property type="protein sequence ID" value="AAI22850.1"/>
    <property type="molecule type" value="mRNA"/>
</dbReference>
<dbReference type="RefSeq" id="NP_001073068.1">
    <property type="nucleotide sequence ID" value="NM_001079600.1"/>
</dbReference>
<dbReference type="SMR" id="Q05B45"/>
<dbReference type="FunCoup" id="Q05B45">
    <property type="interactions" value="696"/>
</dbReference>
<dbReference type="STRING" id="9913.ENSBTAP00000021482"/>
<dbReference type="PaxDb" id="9913-ENSBTAP00000021482"/>
<dbReference type="GeneID" id="520173"/>
<dbReference type="KEGG" id="bta:520173"/>
<dbReference type="CTD" id="83862"/>
<dbReference type="VEuPathDB" id="HostDB:ENSBTAG00000016139"/>
<dbReference type="eggNOG" id="KOG4758">
    <property type="taxonomic scope" value="Eukaryota"/>
</dbReference>
<dbReference type="HOGENOM" id="CLU_048749_1_1_1"/>
<dbReference type="InParanoid" id="Q05B45"/>
<dbReference type="OMA" id="DRYRYKQ"/>
<dbReference type="OrthoDB" id="2015098at2759"/>
<dbReference type="TreeFam" id="TF313552"/>
<dbReference type="Proteomes" id="UP000009136">
    <property type="component" value="Chromosome 25"/>
</dbReference>
<dbReference type="Bgee" id="ENSBTAG00000016139">
    <property type="expression patterns" value="Expressed in granulosa cell and 105 other cell types or tissues"/>
</dbReference>
<dbReference type="GO" id="GO:0005783">
    <property type="term" value="C:endoplasmic reticulum"/>
    <property type="evidence" value="ECO:0007669"/>
    <property type="project" value="UniProtKB-SubCell"/>
</dbReference>
<dbReference type="GO" id="GO:0016020">
    <property type="term" value="C:membrane"/>
    <property type="evidence" value="ECO:0000318"/>
    <property type="project" value="GO_Central"/>
</dbReference>
<dbReference type="GO" id="GO:0005637">
    <property type="term" value="C:nuclear inner membrane"/>
    <property type="evidence" value="ECO:0007669"/>
    <property type="project" value="UniProtKB-SubCell"/>
</dbReference>
<dbReference type="GO" id="GO:0005886">
    <property type="term" value="C:plasma membrane"/>
    <property type="evidence" value="ECO:0000250"/>
    <property type="project" value="UniProtKB"/>
</dbReference>
<dbReference type="GO" id="GO:0120225">
    <property type="term" value="F:coenzyme A binding"/>
    <property type="evidence" value="ECO:0000250"/>
    <property type="project" value="UniProtKB"/>
</dbReference>
<dbReference type="GO" id="GO:0005216">
    <property type="term" value="F:monoatomic ion channel activity"/>
    <property type="evidence" value="ECO:0000250"/>
    <property type="project" value="UniProtKB"/>
</dbReference>
<dbReference type="GO" id="GO:0050966">
    <property type="term" value="P:detection of mechanical stimulus involved in sensory perception of pain"/>
    <property type="evidence" value="ECO:0000250"/>
    <property type="project" value="UniProtKB"/>
</dbReference>
<dbReference type="GO" id="GO:0045444">
    <property type="term" value="P:fat cell differentiation"/>
    <property type="evidence" value="ECO:0000250"/>
    <property type="project" value="UniProtKB"/>
</dbReference>
<dbReference type="GO" id="GO:0034220">
    <property type="term" value="P:monoatomic ion transmembrane transport"/>
    <property type="evidence" value="ECO:0000250"/>
    <property type="project" value="UniProtKB"/>
</dbReference>
<dbReference type="GO" id="GO:0051291">
    <property type="term" value="P:protein heterooligomerization"/>
    <property type="evidence" value="ECO:0000250"/>
    <property type="project" value="UniProtKB"/>
</dbReference>
<dbReference type="GO" id="GO:0051260">
    <property type="term" value="P:protein homooligomerization"/>
    <property type="evidence" value="ECO:0000250"/>
    <property type="project" value="UniProtKB"/>
</dbReference>
<dbReference type="InterPro" id="IPR012926">
    <property type="entry name" value="TMEM120A/B"/>
</dbReference>
<dbReference type="PANTHER" id="PTHR21433:SF1">
    <property type="entry name" value="ION CHANNEL TACAN"/>
    <property type="match status" value="1"/>
</dbReference>
<dbReference type="PANTHER" id="PTHR21433">
    <property type="entry name" value="TRANSMEMBRANE PROTEIN INDUCED BY TUMOR NECROSIS FACTOR ALPHA"/>
    <property type="match status" value="1"/>
</dbReference>
<dbReference type="Pfam" id="PF07851">
    <property type="entry name" value="TMEM120A-B"/>
    <property type="match status" value="1"/>
</dbReference>
<name>TACAN_BOVIN</name>